<protein>
    <recommendedName>
        <fullName evidence="8">Aminotransferase tdiD</fullName>
        <ecNumber evidence="4">2.6.1.28</ecNumber>
    </recommendedName>
    <alternativeName>
        <fullName evidence="7">Terrequinone biosynthesis protein D</fullName>
    </alternativeName>
</protein>
<organism>
    <name type="scientific">Emericella nidulans (strain FGSC A4 / ATCC 38163 / CBS 112.46 / NRRL 194 / M139)</name>
    <name type="common">Aspergillus nidulans</name>
    <dbReference type="NCBI Taxonomy" id="227321"/>
    <lineage>
        <taxon>Eukaryota</taxon>
        <taxon>Fungi</taxon>
        <taxon>Dikarya</taxon>
        <taxon>Ascomycota</taxon>
        <taxon>Pezizomycotina</taxon>
        <taxon>Eurotiomycetes</taxon>
        <taxon>Eurotiomycetidae</taxon>
        <taxon>Eurotiales</taxon>
        <taxon>Aspergillaceae</taxon>
        <taxon>Aspergillus</taxon>
        <taxon>Aspergillus subgen. Nidulantes</taxon>
    </lineage>
</organism>
<sequence>MGSIGANNAVADPTPLFSSRVQKWEPGAIRSLLPLEALPGMISLVAGKPSPETFPIAEIAISLKDTPAGTGRIVVDGDELNQALQYGLPRGNAQLIQWFESLQRSVHGLDENGGWSCCIGNGSQELIHRVIQVFTDPGDPVLLETPAYPGVAGFLRADGQELIPVYSDAQGLNPASLEQALSEWPGDSPRPKVLYTTPTGSNPTGQSCTESRKAEILRLAKRFNFIILEDDAYYYLNYGDDKQRARSYLALERDVNGESGRVVRFDSLSKIVSPGMRLGILTAQAAVVDKVVRITENINLQPSSTTQLLALSLLRHWGQAGFLKHCAEAAEVYRRRRDVFVSAAERHLQGRATWVVPTAGMFVWLELKLPPEMDSFELLKSQGMKNGVLAIPGVAFMPGNEQTCYIRVSFSLVPERDMDEACRRIAGLVDRCACHS</sequence>
<dbReference type="EC" id="2.6.1.28" evidence="4"/>
<dbReference type="EMBL" id="EF550584">
    <property type="protein sequence ID" value="ABU51605.1"/>
    <property type="molecule type" value="mRNA"/>
</dbReference>
<dbReference type="EMBL" id="BN001305">
    <property type="protein sequence ID" value="CBF80716.1"/>
    <property type="status" value="ALT_SEQ"/>
    <property type="molecule type" value="Genomic_DNA"/>
</dbReference>
<dbReference type="EMBL" id="AACD01000154">
    <property type="protein sequence ID" value="EAA66860.1"/>
    <property type="status" value="ALT_SEQ"/>
    <property type="molecule type" value="Genomic_DNA"/>
</dbReference>
<dbReference type="EMBL" id="AACD01000155">
    <property type="protein sequence ID" value="EAA66872.1"/>
    <property type="status" value="ALT_SEQ"/>
    <property type="molecule type" value="Genomic_DNA"/>
</dbReference>
<dbReference type="RefSeq" id="XP_681785.1">
    <property type="nucleotide sequence ID" value="XM_676693.1"/>
</dbReference>
<dbReference type="RefSeq" id="XP_681788.1">
    <property type="nucleotide sequence ID" value="XM_676696.1"/>
</dbReference>
<dbReference type="SMR" id="A7XRY8"/>
<dbReference type="STRING" id="227321.A7XRY8"/>
<dbReference type="KEGG" id="ani:ANIA_08516"/>
<dbReference type="eggNOG" id="KOG0634">
    <property type="taxonomic scope" value="Eukaryota"/>
</dbReference>
<dbReference type="InParanoid" id="A7XRY8"/>
<dbReference type="OrthoDB" id="691673at2759"/>
<dbReference type="BioCyc" id="MetaCyc:MONOMER-18726"/>
<dbReference type="BRENDA" id="2.6.1.28">
    <property type="organism ID" value="517"/>
</dbReference>
<dbReference type="SABIO-RK" id="A7XRY8"/>
<dbReference type="Proteomes" id="UP000000560">
    <property type="component" value="Chromosome V"/>
</dbReference>
<dbReference type="GO" id="GO:0070529">
    <property type="term" value="F:L-tryptophan aminotransferase activity"/>
    <property type="evidence" value="ECO:0000314"/>
    <property type="project" value="UniProt"/>
</dbReference>
<dbReference type="GO" id="GO:0030170">
    <property type="term" value="F:pyridoxal phosphate binding"/>
    <property type="evidence" value="ECO:0007669"/>
    <property type="project" value="InterPro"/>
</dbReference>
<dbReference type="GO" id="GO:0008483">
    <property type="term" value="F:transaminase activity"/>
    <property type="evidence" value="ECO:0000318"/>
    <property type="project" value="GO_Central"/>
</dbReference>
<dbReference type="GO" id="GO:0047299">
    <property type="term" value="F:tryptophan-phenylpyruvate transaminase activity"/>
    <property type="evidence" value="ECO:0007669"/>
    <property type="project" value="RHEA"/>
</dbReference>
<dbReference type="GO" id="GO:1901605">
    <property type="term" value="P:alpha-amino acid metabolic process"/>
    <property type="evidence" value="ECO:0000318"/>
    <property type="project" value="GO_Central"/>
</dbReference>
<dbReference type="GO" id="GO:1900796">
    <property type="term" value="P:terrequinone A biosynthetic process"/>
    <property type="evidence" value="ECO:0000314"/>
    <property type="project" value="UniProt"/>
</dbReference>
<dbReference type="CDD" id="cd00609">
    <property type="entry name" value="AAT_like"/>
    <property type="match status" value="1"/>
</dbReference>
<dbReference type="Gene3D" id="3.40.640.10">
    <property type="entry name" value="Type I PLP-dependent aspartate aminotransferase-like (Major domain)"/>
    <property type="match status" value="1"/>
</dbReference>
<dbReference type="InterPro" id="IPR004839">
    <property type="entry name" value="Aminotransferase_I/II_large"/>
</dbReference>
<dbReference type="InterPro" id="IPR050859">
    <property type="entry name" value="Class-I_PLP-dep_aminotransf"/>
</dbReference>
<dbReference type="InterPro" id="IPR015424">
    <property type="entry name" value="PyrdxlP-dep_Trfase"/>
</dbReference>
<dbReference type="InterPro" id="IPR015421">
    <property type="entry name" value="PyrdxlP-dep_Trfase_major"/>
</dbReference>
<dbReference type="PANTHER" id="PTHR42790">
    <property type="entry name" value="AMINOTRANSFERASE"/>
    <property type="match status" value="1"/>
</dbReference>
<dbReference type="PANTHER" id="PTHR42790:SF19">
    <property type="entry name" value="KYNURENINE_ALPHA-AMINOADIPATE AMINOTRANSFERASE, MITOCHONDRIAL"/>
    <property type="match status" value="1"/>
</dbReference>
<dbReference type="Pfam" id="PF00155">
    <property type="entry name" value="Aminotran_1_2"/>
    <property type="match status" value="1"/>
</dbReference>
<dbReference type="SUPFAM" id="SSF53383">
    <property type="entry name" value="PLP-dependent transferases"/>
    <property type="match status" value="1"/>
</dbReference>
<gene>
    <name evidence="7" type="primary">tdiD</name>
    <name type="ORF">AN8516</name>
</gene>
<keyword id="KW-0032">Aminotransferase</keyword>
<keyword id="KW-0663">Pyridoxal phosphate</keyword>
<keyword id="KW-1185">Reference proteome</keyword>
<keyword id="KW-0808">Transferase</keyword>
<accession>A7XRY8</accession>
<accession>C8VEN5</accession>
<accession>Q5AT61</accession>
<accession>Q5AT64</accession>
<reference key="1">
    <citation type="journal article" date="2007" name="Nat. Chem. Biol.">
        <title>Terrequinone A biosynthesis through L-tryptophan oxidation, dimerization and bisprenylation.</title>
        <authorList>
            <person name="Balibar C.J."/>
            <person name="Howard-Jones A.R."/>
            <person name="Walsh C.T."/>
        </authorList>
    </citation>
    <scope>NUCLEOTIDE SEQUENCE [MRNA]</scope>
    <scope>FUNCTION</scope>
    <scope>CATALYTIC ACTIVITY</scope>
    <scope>BIOPHYSICOCHEMICAL PROPERTIES</scope>
    <source>
        <strain>FGSC A4 / ATCC 38163 / CBS 112.46 / NRRL 194 / M139</strain>
    </source>
</reference>
<reference key="2">
    <citation type="journal article" date="2005" name="Nature">
        <title>Sequencing of Aspergillus nidulans and comparative analysis with A. fumigatus and A. oryzae.</title>
        <authorList>
            <person name="Galagan J.E."/>
            <person name="Calvo S.E."/>
            <person name="Cuomo C."/>
            <person name="Ma L.-J."/>
            <person name="Wortman J.R."/>
            <person name="Batzoglou S."/>
            <person name="Lee S.-I."/>
            <person name="Bastuerkmen M."/>
            <person name="Spevak C.C."/>
            <person name="Clutterbuck J."/>
            <person name="Kapitonov V."/>
            <person name="Jurka J."/>
            <person name="Scazzocchio C."/>
            <person name="Farman M.L."/>
            <person name="Butler J."/>
            <person name="Purcell S."/>
            <person name="Harris S."/>
            <person name="Braus G.H."/>
            <person name="Draht O."/>
            <person name="Busch S."/>
            <person name="D'Enfert C."/>
            <person name="Bouchier C."/>
            <person name="Goldman G.H."/>
            <person name="Bell-Pedersen D."/>
            <person name="Griffiths-Jones S."/>
            <person name="Doonan J.H."/>
            <person name="Yu J."/>
            <person name="Vienken K."/>
            <person name="Pain A."/>
            <person name="Freitag M."/>
            <person name="Selker E.U."/>
            <person name="Archer D.B."/>
            <person name="Penalva M.A."/>
            <person name="Oakley B.R."/>
            <person name="Momany M."/>
            <person name="Tanaka T."/>
            <person name="Kumagai T."/>
            <person name="Asai K."/>
            <person name="Machida M."/>
            <person name="Nierman W.C."/>
            <person name="Denning D.W."/>
            <person name="Caddick M.X."/>
            <person name="Hynes M."/>
            <person name="Paoletti M."/>
            <person name="Fischer R."/>
            <person name="Miller B.L."/>
            <person name="Dyer P.S."/>
            <person name="Sachs M.S."/>
            <person name="Osmani S.A."/>
            <person name="Birren B.W."/>
        </authorList>
    </citation>
    <scope>NUCLEOTIDE SEQUENCE [LARGE SCALE GENOMIC DNA]</scope>
    <source>
        <strain>FGSC A4 / ATCC 38163 / CBS 112.46 / NRRL 194 / M139</strain>
    </source>
</reference>
<reference key="3">
    <citation type="journal article" date="2009" name="Fungal Genet. Biol.">
        <title>The 2008 update of the Aspergillus nidulans genome annotation: a community effort.</title>
        <authorList>
            <person name="Wortman J.R."/>
            <person name="Gilsenan J.M."/>
            <person name="Joardar V."/>
            <person name="Deegan J."/>
            <person name="Clutterbuck J."/>
            <person name="Andersen M.R."/>
            <person name="Archer D."/>
            <person name="Bencina M."/>
            <person name="Braus G."/>
            <person name="Coutinho P."/>
            <person name="von Dohren H."/>
            <person name="Doonan J."/>
            <person name="Driessen A.J."/>
            <person name="Durek P."/>
            <person name="Espeso E."/>
            <person name="Fekete E."/>
            <person name="Flipphi M."/>
            <person name="Estrada C.G."/>
            <person name="Geysens S."/>
            <person name="Goldman G."/>
            <person name="de Groot P.W."/>
            <person name="Hansen K."/>
            <person name="Harris S.D."/>
            <person name="Heinekamp T."/>
            <person name="Helmstaedt K."/>
            <person name="Henrissat B."/>
            <person name="Hofmann G."/>
            <person name="Homan T."/>
            <person name="Horio T."/>
            <person name="Horiuchi H."/>
            <person name="James S."/>
            <person name="Jones M."/>
            <person name="Karaffa L."/>
            <person name="Karanyi Z."/>
            <person name="Kato M."/>
            <person name="Keller N."/>
            <person name="Kelly D.E."/>
            <person name="Kiel J.A."/>
            <person name="Kim J.M."/>
            <person name="van der Klei I.J."/>
            <person name="Klis F.M."/>
            <person name="Kovalchuk A."/>
            <person name="Krasevec N."/>
            <person name="Kubicek C.P."/>
            <person name="Liu B."/>
            <person name="Maccabe A."/>
            <person name="Meyer V."/>
            <person name="Mirabito P."/>
            <person name="Miskei M."/>
            <person name="Mos M."/>
            <person name="Mullins J."/>
            <person name="Nelson D.R."/>
            <person name="Nielsen J."/>
            <person name="Oakley B.R."/>
            <person name="Osmani S.A."/>
            <person name="Pakula T."/>
            <person name="Paszewski A."/>
            <person name="Paulsen I."/>
            <person name="Pilsyk S."/>
            <person name="Pocsi I."/>
            <person name="Punt P.J."/>
            <person name="Ram A.F."/>
            <person name="Ren Q."/>
            <person name="Robellet X."/>
            <person name="Robson G."/>
            <person name="Seiboth B."/>
            <person name="van Solingen P."/>
            <person name="Specht T."/>
            <person name="Sun J."/>
            <person name="Taheri-Talesh N."/>
            <person name="Takeshita N."/>
            <person name="Ussery D."/>
            <person name="vanKuyk P.A."/>
            <person name="Visser H."/>
            <person name="van de Vondervoort P.J."/>
            <person name="de Vries R.P."/>
            <person name="Walton J."/>
            <person name="Xiang X."/>
            <person name="Xiong Y."/>
            <person name="Zeng A.P."/>
            <person name="Brandt B.W."/>
            <person name="Cornell M.J."/>
            <person name="van den Hondel C.A."/>
            <person name="Visser J."/>
            <person name="Oliver S.G."/>
            <person name="Turner G."/>
        </authorList>
    </citation>
    <scope>GENOME REANNOTATION</scope>
    <source>
        <strain>FGSC A4 / ATCC 38163 / CBS 112.46 / NRRL 194 / M139</strain>
    </source>
</reference>
<reference key="4">
    <citation type="journal article" date="2006" name="Chem. Biol.">
        <title>Genomic mining for Aspergillus natural products.</title>
        <authorList>
            <person name="Bok J.W."/>
            <person name="Hoffmeister D."/>
            <person name="Maggio-Hall L.A."/>
            <person name="Murillo R."/>
            <person name="Glasner J.D."/>
            <person name="Keller N.P."/>
        </authorList>
    </citation>
    <scope>IDENTIFICATION</scope>
    <scope>INDUCTION</scope>
</reference>
<reference key="5">
    <citation type="journal article" date="2007" name="Fungal Genet. Biol.">
        <title>Accurate prediction of the Aspergillus nidulans terrequinone gene cluster boundaries using the transcriptional regulator LaeA.</title>
        <authorList>
            <person name="Bouhired S."/>
            <person name="Weber M."/>
            <person name="Kempf-Sontag A."/>
            <person name="Keller N.P."/>
            <person name="Hoffmeister D."/>
        </authorList>
    </citation>
    <scope>IDENTIFICATION</scope>
    <scope>INDUCTION</scope>
    <scope>FUNCTION</scope>
</reference>
<reference key="6">
    <citation type="journal article" date="2008" name="Fungal Genet. Biol.">
        <title>The Aspergillus nidulans enzyme TdiB catalyzes prenyltransfer to the precursor of bioactive asterriquinones.</title>
        <authorList>
            <person name="Schneider P."/>
            <person name="Weber M."/>
            <person name="Hoffmeister D."/>
        </authorList>
    </citation>
    <scope>FUNCTION</scope>
</reference>
<reference key="7">
    <citation type="journal article" date="2012" name="Appl. Microbiol. Biotechnol.">
        <title>Heterologous expression system in Aspergillus oryzae for fungal biosynthetic gene clusters of secondary metabolites.</title>
        <authorList>
            <person name="Sakai K."/>
            <person name="Kinoshita H."/>
            <person name="Nihira T."/>
        </authorList>
    </citation>
    <scope>FUNCTION</scope>
</reference>
<name>TDID_EMENI</name>
<comment type="function">
    <text evidence="2 3 4 5 6">Aminotransferase; part of the gene cluster that mediates the biosynthesis of terrequinone A, an antitumor agent (PubMed:16426969, PubMed:17291795, PubMed:17704773, PubMed:22083274). The first step in the biosynthetic pathway for terrequinone A is formation of indole pyruvic acid (IPA) from L-tryptophan by the aminotransferase tdiD (PubMed:17704773). The nonribosomal peptide synthase tdiA then immediately converts unstable IPA to didemethylasterriquinone D (DDAQ D), via condensation of 2 IPA molecules (PubMed:17704773). The symmetric connectivity of the 2 IPA molecules is thought to arise by head-to-tail dual Claisen condensations facilitated by the TE domain (PubMed:17704773). TdiB then catalyzes reverse prenylation by transferring dimethylallyl diphosphate to carbon atom 2' of DDAQ D, to yield asterriquinone C-1 (PubMed:18029206). Finally, tdiC and tdiE enzymes robustly convert asterriquinone C-1 to terrequinone A via a transformation involving regular prenylation at carbon atom 5, which requires elimination of the hydroxy group on C-5 (PubMed:17704773, PubMed:18029206).</text>
</comment>
<comment type="catalytic activity">
    <reaction evidence="4">
        <text>3-phenylpyruvate + L-tryptophan = indole-3-pyruvate + L-phenylalanine</text>
        <dbReference type="Rhea" id="RHEA:13741"/>
        <dbReference type="ChEBI" id="CHEBI:17640"/>
        <dbReference type="ChEBI" id="CHEBI:18005"/>
        <dbReference type="ChEBI" id="CHEBI:57912"/>
        <dbReference type="ChEBI" id="CHEBI:58095"/>
        <dbReference type="EC" id="2.6.1.28"/>
    </reaction>
    <physiologicalReaction direction="left-to-right" evidence="4">
        <dbReference type="Rhea" id="RHEA:13742"/>
    </physiologicalReaction>
</comment>
<comment type="cofactor">
    <cofactor evidence="4">
        <name>pyridoxal 5'-phosphate</name>
        <dbReference type="ChEBI" id="CHEBI:597326"/>
    </cofactor>
</comment>
<comment type="biophysicochemical properties">
    <kinetics>
        <KM evidence="4">198 uM for L-tryptophan</KM>
    </kinetics>
</comment>
<comment type="pathway">
    <text evidence="3 4">Secondary metabolite biosynthesis.</text>
</comment>
<comment type="induction">
    <text evidence="2 3">Expression is positively regulated by the secondary metabolism regulator laeA (PubMed:16426969, PubMed:17291795).</text>
</comment>
<comment type="similarity">
    <text evidence="8">Belongs to the class-I pyridoxal-phosphate-dependent aminotransferase family.</text>
</comment>
<comment type="sequence caution" evidence="8">
    <conflict type="erroneous gene model prediction">
        <sequence resource="EMBL-CDS" id="CBF80716"/>
    </conflict>
</comment>
<comment type="sequence caution" evidence="8">
    <conflict type="erroneous gene model prediction">
        <sequence resource="EMBL-CDS" id="EAA66860"/>
    </conflict>
</comment>
<comment type="sequence caution" evidence="8">
    <conflict type="erroneous gene model prediction">
        <sequence resource="EMBL-CDS" id="EAA66872"/>
    </conflict>
</comment>
<proteinExistence type="evidence at protein level"/>
<feature type="chain" id="PRO_0000436367" description="Aminotransferase tdiD">
    <location>
        <begin position="1"/>
        <end position="436"/>
    </location>
</feature>
<feature type="binding site" evidence="1">
    <location>
        <position position="30"/>
    </location>
    <ligand>
        <name>substrate</name>
    </ligand>
</feature>
<feature type="binding site" evidence="1">
    <location>
        <position position="86"/>
    </location>
    <ligand>
        <name>substrate</name>
    </ligand>
</feature>
<feature type="binding site" evidence="1">
    <location>
        <position position="148"/>
    </location>
    <ligand>
        <name>substrate</name>
    </ligand>
</feature>
<feature type="binding site" evidence="1">
    <location>
        <position position="202"/>
    </location>
    <ligand>
        <name>substrate</name>
    </ligand>
</feature>
<feature type="binding site" evidence="1">
    <location>
        <position position="407"/>
    </location>
    <ligand>
        <name>substrate</name>
    </ligand>
</feature>
<feature type="modified residue" description="N6-(pyridoxal phosphate)lysine" evidence="1">
    <location>
        <position position="270"/>
    </location>
</feature>
<evidence type="ECO:0000250" key="1">
    <source>
        <dbReference type="UniProtKB" id="Q8N5Z0"/>
    </source>
</evidence>
<evidence type="ECO:0000269" key="2">
    <source>
    </source>
</evidence>
<evidence type="ECO:0000269" key="3">
    <source>
    </source>
</evidence>
<evidence type="ECO:0000269" key="4">
    <source>
    </source>
</evidence>
<evidence type="ECO:0000269" key="5">
    <source>
    </source>
</evidence>
<evidence type="ECO:0000269" key="6">
    <source>
    </source>
</evidence>
<evidence type="ECO:0000303" key="7">
    <source>
    </source>
</evidence>
<evidence type="ECO:0000305" key="8"/>